<protein>
    <recommendedName>
        <fullName>Geranylgeranyl pyrophosphate synthase 12, chloroplastic</fullName>
        <shortName>GGPP synthase 12</shortName>
        <shortName>GGPS12</shortName>
        <ecNumber>2.5.1.-</ecNumber>
    </recommendedName>
    <alternativeName>
        <fullName>(2E,6E)-farnesyl diphosphate synthase 12</fullName>
    </alternativeName>
    <alternativeName>
        <fullName>Dimethylallyltranstransferase 12</fullName>
        <ecNumber>2.5.1.1</ecNumber>
    </alternativeName>
    <alternativeName>
        <fullName>Farnesyl diphosphate synthase 12</fullName>
    </alternativeName>
    <alternativeName>
        <fullName>Farnesyltranstransferase 12</fullName>
        <ecNumber>2.5.1.29</ecNumber>
    </alternativeName>
    <alternativeName>
        <fullName>Geranyltranstransferase 12</fullName>
        <ecNumber>2.5.1.10</ecNumber>
    </alternativeName>
</protein>
<comment type="function">
    <text evidence="1">Catalyzes the trans-addition of the three molecules of IPP onto DMAPP to form geranylgeranyl pyrophosphate.</text>
</comment>
<comment type="catalytic activity">
    <reaction>
        <text>isopentenyl diphosphate + dimethylallyl diphosphate = (2E)-geranyl diphosphate + diphosphate</text>
        <dbReference type="Rhea" id="RHEA:22408"/>
        <dbReference type="ChEBI" id="CHEBI:33019"/>
        <dbReference type="ChEBI" id="CHEBI:57623"/>
        <dbReference type="ChEBI" id="CHEBI:58057"/>
        <dbReference type="ChEBI" id="CHEBI:128769"/>
        <dbReference type="EC" id="2.5.1.1"/>
    </reaction>
</comment>
<comment type="catalytic activity">
    <reaction>
        <text>isopentenyl diphosphate + (2E)-geranyl diphosphate = (2E,6E)-farnesyl diphosphate + diphosphate</text>
        <dbReference type="Rhea" id="RHEA:19361"/>
        <dbReference type="ChEBI" id="CHEBI:33019"/>
        <dbReference type="ChEBI" id="CHEBI:58057"/>
        <dbReference type="ChEBI" id="CHEBI:128769"/>
        <dbReference type="ChEBI" id="CHEBI:175763"/>
        <dbReference type="EC" id="2.5.1.10"/>
    </reaction>
</comment>
<comment type="catalytic activity">
    <reaction>
        <text>isopentenyl diphosphate + (2E,6E)-farnesyl diphosphate = (2E,6E,10E)-geranylgeranyl diphosphate + diphosphate</text>
        <dbReference type="Rhea" id="RHEA:17653"/>
        <dbReference type="ChEBI" id="CHEBI:33019"/>
        <dbReference type="ChEBI" id="CHEBI:58756"/>
        <dbReference type="ChEBI" id="CHEBI:128769"/>
        <dbReference type="ChEBI" id="CHEBI:175763"/>
        <dbReference type="EC" id="2.5.1.29"/>
    </reaction>
</comment>
<comment type="cofactor">
    <cofactor evidence="1">
        <name>Mg(2+)</name>
        <dbReference type="ChEBI" id="CHEBI:18420"/>
    </cofactor>
    <text evidence="1">Binds 2 Mg(2+) ions per subunit.</text>
</comment>
<comment type="pathway">
    <text>Isoprenoid biosynthesis; farnesyl diphosphate biosynthesis; farnesyl diphosphate from geranyl diphosphate and isopentenyl diphosphate: step 1/1.</text>
</comment>
<comment type="pathway">
    <text>Isoprenoid biosynthesis; geranyl diphosphate biosynthesis; geranyl diphosphate from dimethylallyl diphosphate and isopentenyl diphosphate: step 1/1.</text>
</comment>
<comment type="pathway">
    <text>Isoprenoid biosynthesis; geranylgeranyl diphosphate biosynthesis; geranylgeranyl diphosphate from farnesyl diphosphate and isopentenyl diphosphate: step 1/1.</text>
</comment>
<comment type="subunit">
    <text evidence="1">Monomer.</text>
</comment>
<comment type="subcellular location">
    <subcellularLocation>
        <location evidence="5">Plastid</location>
        <location evidence="5">Chloroplast</location>
    </subcellularLocation>
</comment>
<comment type="similarity">
    <text evidence="5">Belongs to the FPP/GGPP synthase family.</text>
</comment>
<accession>Q9LHR4</accession>
<accession>Q56Y72</accession>
<evidence type="ECO:0000250" key="1"/>
<evidence type="ECO:0000250" key="2">
    <source>
        <dbReference type="UniProtKB" id="P14324"/>
    </source>
</evidence>
<evidence type="ECO:0000250" key="3">
    <source>
        <dbReference type="UniProtKB" id="Q12051"/>
    </source>
</evidence>
<evidence type="ECO:0000255" key="4"/>
<evidence type="ECO:0000305" key="5"/>
<feature type="transit peptide" description="Chloroplast" evidence="4">
    <location>
        <begin position="1"/>
        <end position="39"/>
    </location>
</feature>
<feature type="chain" id="PRO_0000402126" description="Geranylgeranyl pyrophosphate synthase 12, chloroplastic">
    <location>
        <begin position="40"/>
        <end position="360"/>
    </location>
</feature>
<feature type="binding site" evidence="2">
    <location>
        <position position="106"/>
    </location>
    <ligand>
        <name>isopentenyl diphosphate</name>
        <dbReference type="ChEBI" id="CHEBI:128769"/>
    </ligand>
</feature>
<feature type="binding site" evidence="2">
    <location>
        <position position="109"/>
    </location>
    <ligand>
        <name>isopentenyl diphosphate</name>
        <dbReference type="ChEBI" id="CHEBI:128769"/>
    </ligand>
</feature>
<feature type="binding site" evidence="3">
    <location>
        <position position="138"/>
    </location>
    <ligand>
        <name>isopentenyl diphosphate</name>
        <dbReference type="ChEBI" id="CHEBI:128769"/>
    </ligand>
</feature>
<feature type="binding site" evidence="2">
    <location>
        <position position="145"/>
    </location>
    <ligand>
        <name>Mg(2+)</name>
        <dbReference type="ChEBI" id="CHEBI:18420"/>
        <label>1</label>
    </ligand>
</feature>
<feature type="binding site" evidence="2">
    <location>
        <position position="145"/>
    </location>
    <ligand>
        <name>Mg(2+)</name>
        <dbReference type="ChEBI" id="CHEBI:18420"/>
        <label>2</label>
    </ligand>
</feature>
<feature type="binding site" evidence="2">
    <location>
        <position position="151"/>
    </location>
    <ligand>
        <name>Mg(2+)</name>
        <dbReference type="ChEBI" id="CHEBI:18420"/>
        <label>1</label>
    </ligand>
</feature>
<feature type="binding site" evidence="2">
    <location>
        <position position="151"/>
    </location>
    <ligand>
        <name>Mg(2+)</name>
        <dbReference type="ChEBI" id="CHEBI:18420"/>
        <label>2</label>
    </ligand>
</feature>
<feature type="binding site" evidence="1">
    <location>
        <position position="156"/>
    </location>
    <ligand>
        <name>dimethylallyl diphosphate</name>
        <dbReference type="ChEBI" id="CHEBI:57623"/>
    </ligand>
</feature>
<feature type="binding site" evidence="2">
    <location>
        <position position="157"/>
    </location>
    <ligand>
        <name>isopentenyl diphosphate</name>
        <dbReference type="ChEBI" id="CHEBI:128769"/>
    </ligand>
</feature>
<feature type="binding site" evidence="1">
    <location>
        <position position="245"/>
    </location>
    <ligand>
        <name>dimethylallyl diphosphate</name>
        <dbReference type="ChEBI" id="CHEBI:57623"/>
    </ligand>
</feature>
<feature type="binding site" evidence="1">
    <location>
        <position position="246"/>
    </location>
    <ligand>
        <name>dimethylallyl diphosphate</name>
        <dbReference type="ChEBI" id="CHEBI:57623"/>
    </ligand>
</feature>
<feature type="binding site" evidence="1">
    <location>
        <position position="283"/>
    </location>
    <ligand>
        <name>dimethylallyl diphosphate</name>
        <dbReference type="ChEBI" id="CHEBI:57623"/>
    </ligand>
</feature>
<feature type="binding site" evidence="1">
    <location>
        <position position="300"/>
    </location>
    <ligand>
        <name>dimethylallyl diphosphate</name>
        <dbReference type="ChEBI" id="CHEBI:57623"/>
    </ligand>
</feature>
<feature type="binding site" evidence="1">
    <location>
        <position position="310"/>
    </location>
    <ligand>
        <name>dimethylallyl diphosphate</name>
        <dbReference type="ChEBI" id="CHEBI:57623"/>
    </ligand>
</feature>
<feature type="sequence conflict" description="In Ref. 4; BAD94520." evidence="5" ref="4">
    <original>M</original>
    <variation>K</variation>
    <location>
        <position position="307"/>
    </location>
</feature>
<reference key="1">
    <citation type="submission" date="2000-05" db="EMBL/GenBank/DDBJ databases">
        <title>Structural analysis of Arabidopsis thaliana chromosome 3. III.</title>
        <authorList>
            <person name="Nakamura Y."/>
        </authorList>
    </citation>
    <scope>NUCLEOTIDE SEQUENCE [LARGE SCALE GENOMIC DNA]</scope>
    <source>
        <strain>cv. Columbia</strain>
    </source>
</reference>
<reference key="2">
    <citation type="journal article" date="2017" name="Plant J.">
        <title>Araport11: a complete reannotation of the Arabidopsis thaliana reference genome.</title>
        <authorList>
            <person name="Cheng C.Y."/>
            <person name="Krishnakumar V."/>
            <person name="Chan A.P."/>
            <person name="Thibaud-Nissen F."/>
            <person name="Schobel S."/>
            <person name="Town C.D."/>
        </authorList>
    </citation>
    <scope>GENOME REANNOTATION</scope>
    <source>
        <strain>cv. Columbia</strain>
    </source>
</reference>
<reference key="3">
    <citation type="submission" date="2004-07" db="EMBL/GenBank/DDBJ databases">
        <title>Arabidopsis ORF clones.</title>
        <authorList>
            <person name="Cheuk R.F."/>
            <person name="Chen H."/>
            <person name="Kim C.J."/>
            <person name="Shinn P."/>
            <person name="Ecker J.R."/>
        </authorList>
    </citation>
    <scope>NUCLEOTIDE SEQUENCE [LARGE SCALE MRNA]</scope>
    <source>
        <strain>cv. Columbia</strain>
    </source>
</reference>
<reference key="4">
    <citation type="submission" date="2005-03" db="EMBL/GenBank/DDBJ databases">
        <title>Large-scale analysis of RIKEN Arabidopsis full-length (RAFL) cDNAs.</title>
        <authorList>
            <person name="Totoki Y."/>
            <person name="Seki M."/>
            <person name="Ishida J."/>
            <person name="Nakajima M."/>
            <person name="Enju A."/>
            <person name="Kamiya A."/>
            <person name="Narusaka M."/>
            <person name="Shin-i T."/>
            <person name="Nakagawa M."/>
            <person name="Sakamoto N."/>
            <person name="Oishi K."/>
            <person name="Kohara Y."/>
            <person name="Kobayashi M."/>
            <person name="Toyoda A."/>
            <person name="Sakaki Y."/>
            <person name="Sakurai T."/>
            <person name="Iida K."/>
            <person name="Akiyama K."/>
            <person name="Satou M."/>
            <person name="Toyoda T."/>
            <person name="Konagaya A."/>
            <person name="Carninci P."/>
            <person name="Kawai J."/>
            <person name="Hayashizaki Y."/>
            <person name="Shinozaki K."/>
        </authorList>
    </citation>
    <scope>NUCLEOTIDE SEQUENCE [LARGE SCALE MRNA]</scope>
    <source>
        <strain>cv. Columbia</strain>
    </source>
</reference>
<name>GGPPC_ARATH</name>
<gene>
    <name type="ordered locus">At3g32040</name>
    <name type="ORF">F1M23.7</name>
</gene>
<keyword id="KW-0125">Carotenoid biosynthesis</keyword>
<keyword id="KW-0150">Chloroplast</keyword>
<keyword id="KW-0414">Isoprene biosynthesis</keyword>
<keyword id="KW-0460">Magnesium</keyword>
<keyword id="KW-0479">Metal-binding</keyword>
<keyword id="KW-0934">Plastid</keyword>
<keyword id="KW-1185">Reference proteome</keyword>
<keyword id="KW-0808">Transferase</keyword>
<keyword id="KW-0809">Transit peptide</keyword>
<sequence>MANTVHLSSSSLFIQTRGRKYNSILSFNNLQKRTVLSLSCALTSQGGKDMIPPKGKSNDRNFAFDFKSYMIRKAESVSMALNVSVPPQDPLAIQEAVRYSLLAGGKRVRPLLCIAACELVGGDEATAMSAACAVEMIHTSSLIHDDLPCMDDADLRRGKPTNHKVFGEHMAVLAGDALLALAFEHMTVVSSGLVAPERMIRSVTELAKAIGTKGLVAGQVSDLCSQGLNPYDVGLERLEFIHLHKTAALLEAAAVLGAIIGGGTEEEIQKLRKYGRCIGLLFQVVDDIIDVTESTEELGKTAGKDVMARKLTYPRLIGLERSREVAEKLRREAAEQLLGFDSNKVAPLVALASYIACRHN</sequence>
<dbReference type="EC" id="2.5.1.-"/>
<dbReference type="EC" id="2.5.1.1"/>
<dbReference type="EC" id="2.5.1.29"/>
<dbReference type="EC" id="2.5.1.10"/>
<dbReference type="EMBL" id="AP002033">
    <property type="protein sequence ID" value="BAB01936.1"/>
    <property type="molecule type" value="Genomic_DNA"/>
</dbReference>
<dbReference type="EMBL" id="CP002686">
    <property type="protein sequence ID" value="AEE77681.1"/>
    <property type="molecule type" value="Genomic_DNA"/>
</dbReference>
<dbReference type="EMBL" id="BT015110">
    <property type="protein sequence ID" value="AAT71982.1"/>
    <property type="molecule type" value="mRNA"/>
</dbReference>
<dbReference type="EMBL" id="AK221451">
    <property type="protein sequence ID" value="BAD94520.1"/>
    <property type="molecule type" value="mRNA"/>
</dbReference>
<dbReference type="RefSeq" id="NP_189747.1">
    <property type="nucleotide sequence ID" value="NM_114027.3"/>
</dbReference>
<dbReference type="SMR" id="Q9LHR4"/>
<dbReference type="FunCoup" id="Q9LHR4">
    <property type="interactions" value="17"/>
</dbReference>
<dbReference type="STRING" id="3702.Q9LHR4"/>
<dbReference type="PaxDb" id="3702-AT3G32040.1"/>
<dbReference type="ProteomicsDB" id="221845"/>
<dbReference type="EnsemblPlants" id="AT3G32040.1">
    <property type="protein sequence ID" value="AT3G32040.1"/>
    <property type="gene ID" value="AT3G32040"/>
</dbReference>
<dbReference type="GeneID" id="822957"/>
<dbReference type="Gramene" id="AT3G32040.1">
    <property type="protein sequence ID" value="AT3G32040.1"/>
    <property type="gene ID" value="AT3G32040"/>
</dbReference>
<dbReference type="KEGG" id="ath:AT3G32040"/>
<dbReference type="Araport" id="AT3G32040"/>
<dbReference type="TAIR" id="AT3G32040">
    <property type="gene designation" value="ATGGPS10"/>
</dbReference>
<dbReference type="eggNOG" id="KOG0776">
    <property type="taxonomic scope" value="Eukaryota"/>
</dbReference>
<dbReference type="HOGENOM" id="CLU_014015_0_0_1"/>
<dbReference type="InParanoid" id="Q9LHR4"/>
<dbReference type="OMA" id="CADEDNY"/>
<dbReference type="PhylomeDB" id="Q9LHR4"/>
<dbReference type="BioCyc" id="ARA:AT3G32040-MONOMER"/>
<dbReference type="UniPathway" id="UPA00259">
    <property type="reaction ID" value="UER00368"/>
</dbReference>
<dbReference type="UniPathway" id="UPA00260">
    <property type="reaction ID" value="UER00369"/>
</dbReference>
<dbReference type="UniPathway" id="UPA00389">
    <property type="reaction ID" value="UER00564"/>
</dbReference>
<dbReference type="PRO" id="PR:Q9LHR4"/>
<dbReference type="Proteomes" id="UP000006548">
    <property type="component" value="Chromosome 3"/>
</dbReference>
<dbReference type="ExpressionAtlas" id="Q9LHR4">
    <property type="expression patterns" value="baseline and differential"/>
</dbReference>
<dbReference type="GO" id="GO:0009507">
    <property type="term" value="C:chloroplast"/>
    <property type="evidence" value="ECO:0000314"/>
    <property type="project" value="TAIR"/>
</dbReference>
<dbReference type="GO" id="GO:0010287">
    <property type="term" value="C:plastoglobule"/>
    <property type="evidence" value="ECO:0000314"/>
    <property type="project" value="TAIR"/>
</dbReference>
<dbReference type="GO" id="GO:0004337">
    <property type="term" value="F:(2E,6E)-farnesyl diphosphate synthase activity"/>
    <property type="evidence" value="ECO:0007669"/>
    <property type="project" value="UniProtKB-EC"/>
</dbReference>
<dbReference type="GO" id="GO:0004161">
    <property type="term" value="F:dimethylallyltranstransferase activity"/>
    <property type="evidence" value="ECO:0007669"/>
    <property type="project" value="UniProtKB-EC"/>
</dbReference>
<dbReference type="GO" id="GO:0044687">
    <property type="term" value="F:geranylfarnesyl diphosphate synthase activity"/>
    <property type="evidence" value="ECO:0000314"/>
    <property type="project" value="TAIR"/>
</dbReference>
<dbReference type="GO" id="GO:0004311">
    <property type="term" value="F:geranylgeranyl diphosphate synthase activity"/>
    <property type="evidence" value="ECO:0007669"/>
    <property type="project" value="UniProtKB-EC"/>
</dbReference>
<dbReference type="GO" id="GO:0046872">
    <property type="term" value="F:metal ion binding"/>
    <property type="evidence" value="ECO:0007669"/>
    <property type="project" value="UniProtKB-KW"/>
</dbReference>
<dbReference type="GO" id="GO:0016117">
    <property type="term" value="P:carotenoid biosynthetic process"/>
    <property type="evidence" value="ECO:0007669"/>
    <property type="project" value="UniProtKB-KW"/>
</dbReference>
<dbReference type="GO" id="GO:0045337">
    <property type="term" value="P:farnesyl diphosphate biosynthetic process"/>
    <property type="evidence" value="ECO:0000314"/>
    <property type="project" value="TAIR"/>
</dbReference>
<dbReference type="GO" id="GO:0033384">
    <property type="term" value="P:geranyl diphosphate biosynthetic process"/>
    <property type="evidence" value="ECO:0007669"/>
    <property type="project" value="UniProtKB-UniPathway"/>
</dbReference>
<dbReference type="GO" id="GO:0033386">
    <property type="term" value="P:geranylgeranyl diphosphate biosynthetic process"/>
    <property type="evidence" value="ECO:0007669"/>
    <property type="project" value="UniProtKB-UniPathway"/>
</dbReference>
<dbReference type="CDD" id="cd00685">
    <property type="entry name" value="Trans_IPPS_HT"/>
    <property type="match status" value="1"/>
</dbReference>
<dbReference type="FunFam" id="1.10.600.10:FF:000001">
    <property type="entry name" value="Geranylgeranyl diphosphate synthase"/>
    <property type="match status" value="1"/>
</dbReference>
<dbReference type="Gene3D" id="1.10.600.10">
    <property type="entry name" value="Farnesyl Diphosphate Synthase"/>
    <property type="match status" value="1"/>
</dbReference>
<dbReference type="InterPro" id="IPR008949">
    <property type="entry name" value="Isoprenoid_synthase_dom_sf"/>
</dbReference>
<dbReference type="InterPro" id="IPR000092">
    <property type="entry name" value="Polyprenyl_synt"/>
</dbReference>
<dbReference type="InterPro" id="IPR033749">
    <property type="entry name" value="Polyprenyl_synt_CS"/>
</dbReference>
<dbReference type="InterPro" id="IPR053378">
    <property type="entry name" value="Prenyl_diphosphate_synthase"/>
</dbReference>
<dbReference type="NCBIfam" id="NF045485">
    <property type="entry name" value="FPPsyn"/>
    <property type="match status" value="1"/>
</dbReference>
<dbReference type="PANTHER" id="PTHR43281">
    <property type="entry name" value="FARNESYL DIPHOSPHATE SYNTHASE"/>
    <property type="match status" value="1"/>
</dbReference>
<dbReference type="PANTHER" id="PTHR43281:SF11">
    <property type="entry name" value="GERANYLGERANYL PYROPHOSPHATE SYNTHASE 11, CHLOROPLASTIC-RELATED"/>
    <property type="match status" value="1"/>
</dbReference>
<dbReference type="Pfam" id="PF00348">
    <property type="entry name" value="polyprenyl_synt"/>
    <property type="match status" value="1"/>
</dbReference>
<dbReference type="SFLD" id="SFLDS00005">
    <property type="entry name" value="Isoprenoid_Synthase_Type_I"/>
    <property type="match status" value="1"/>
</dbReference>
<dbReference type="SFLD" id="SFLDG01017">
    <property type="entry name" value="Polyprenyl_Transferase_Like"/>
    <property type="match status" value="1"/>
</dbReference>
<dbReference type="SUPFAM" id="SSF48576">
    <property type="entry name" value="Terpenoid synthases"/>
    <property type="match status" value="1"/>
</dbReference>
<dbReference type="PROSITE" id="PS00723">
    <property type="entry name" value="POLYPRENYL_SYNTHASE_1"/>
    <property type="match status" value="1"/>
</dbReference>
<dbReference type="PROSITE" id="PS00444">
    <property type="entry name" value="POLYPRENYL_SYNTHASE_2"/>
    <property type="match status" value="1"/>
</dbReference>
<proteinExistence type="evidence at transcript level"/>
<organism>
    <name type="scientific">Arabidopsis thaliana</name>
    <name type="common">Mouse-ear cress</name>
    <dbReference type="NCBI Taxonomy" id="3702"/>
    <lineage>
        <taxon>Eukaryota</taxon>
        <taxon>Viridiplantae</taxon>
        <taxon>Streptophyta</taxon>
        <taxon>Embryophyta</taxon>
        <taxon>Tracheophyta</taxon>
        <taxon>Spermatophyta</taxon>
        <taxon>Magnoliopsida</taxon>
        <taxon>eudicotyledons</taxon>
        <taxon>Gunneridae</taxon>
        <taxon>Pentapetalae</taxon>
        <taxon>rosids</taxon>
        <taxon>malvids</taxon>
        <taxon>Brassicales</taxon>
        <taxon>Brassicaceae</taxon>
        <taxon>Camelineae</taxon>
        <taxon>Arabidopsis</taxon>
    </lineage>
</organism>